<name>O10S1_HUMAN</name>
<accession>Q8NGN2</accession>
<accession>B9EH43</accession>
<accession>Q6IEV3</accession>
<accession>Q96R78</accession>
<organism>
    <name type="scientific">Homo sapiens</name>
    <name type="common">Human</name>
    <dbReference type="NCBI Taxonomy" id="9606"/>
    <lineage>
        <taxon>Eukaryota</taxon>
        <taxon>Metazoa</taxon>
        <taxon>Chordata</taxon>
        <taxon>Craniata</taxon>
        <taxon>Vertebrata</taxon>
        <taxon>Euteleostomi</taxon>
        <taxon>Mammalia</taxon>
        <taxon>Eutheria</taxon>
        <taxon>Euarchontoglires</taxon>
        <taxon>Primates</taxon>
        <taxon>Haplorrhini</taxon>
        <taxon>Catarrhini</taxon>
        <taxon>Hominidae</taxon>
        <taxon>Homo</taxon>
    </lineage>
</organism>
<sequence>MTSRSVCEKMTMTTENPNQTVVSHFFLEGLRYTAKHSSLFFLLFLLIYSITVAGNLLILLTVGSDSHLSLPMYHFLGHLSFLDACLSTVTVPKVMAGLLTLDGKVISFEGCAVQLYCFHFLASTECFLYTVMAYDRYLAICQPLHYPVAMNRRMCAEMAGITWAIGATHAAIHTSLTFRLLYCGPCHIAYFFCDIPPVLKLACTDTTINELVMLASIGIVAAGCLILIVISYIFIVAAVLRIRTAQGRQRAFSPCTAQLTGVLLYYVPPVCIYLQPRSSEAGAGAPAVFYTIVTPMLNPFIYTLRNKEVKHALQRLLCSSFRESTAGSPPP</sequence>
<evidence type="ECO:0000255" key="1"/>
<evidence type="ECO:0000255" key="2">
    <source>
        <dbReference type="PROSITE-ProRule" id="PRU00521"/>
    </source>
</evidence>
<evidence type="ECO:0000305" key="3"/>
<proteinExistence type="evidence at transcript level"/>
<reference key="1">
    <citation type="submission" date="2001-07" db="EMBL/GenBank/DDBJ databases">
        <title>Genome-wide discovery and analysis of human seven transmembrane helix receptor genes.</title>
        <authorList>
            <person name="Suwa M."/>
            <person name="Sato T."/>
            <person name="Okouchi I."/>
            <person name="Arita M."/>
            <person name="Futami K."/>
            <person name="Matsumoto S."/>
            <person name="Tsutsumi S."/>
            <person name="Aburatani H."/>
            <person name="Asai K."/>
            <person name="Akiyama Y."/>
        </authorList>
    </citation>
    <scope>NUCLEOTIDE SEQUENCE [GENOMIC DNA]</scope>
</reference>
<reference key="2">
    <citation type="journal article" date="2006" name="Nature">
        <title>Human chromosome 11 DNA sequence and analysis including novel gene identification.</title>
        <authorList>
            <person name="Taylor T.D."/>
            <person name="Noguchi H."/>
            <person name="Totoki Y."/>
            <person name="Toyoda A."/>
            <person name="Kuroki Y."/>
            <person name="Dewar K."/>
            <person name="Lloyd C."/>
            <person name="Itoh T."/>
            <person name="Takeda T."/>
            <person name="Kim D.-W."/>
            <person name="She X."/>
            <person name="Barlow K.F."/>
            <person name="Bloom T."/>
            <person name="Bruford E."/>
            <person name="Chang J.L."/>
            <person name="Cuomo C.A."/>
            <person name="Eichler E."/>
            <person name="FitzGerald M.G."/>
            <person name="Jaffe D.B."/>
            <person name="LaButti K."/>
            <person name="Nicol R."/>
            <person name="Park H.-S."/>
            <person name="Seaman C."/>
            <person name="Sougnez C."/>
            <person name="Yang X."/>
            <person name="Zimmer A.R."/>
            <person name="Zody M.C."/>
            <person name="Birren B.W."/>
            <person name="Nusbaum C."/>
            <person name="Fujiyama A."/>
            <person name="Hattori M."/>
            <person name="Rogers J."/>
            <person name="Lander E.S."/>
            <person name="Sakaki Y."/>
        </authorList>
    </citation>
    <scope>NUCLEOTIDE SEQUENCE [LARGE SCALE GENOMIC DNA]</scope>
</reference>
<reference key="3">
    <citation type="journal article" date="2004" name="Genome Res.">
        <title>The status, quality, and expansion of the NIH full-length cDNA project: the Mammalian Gene Collection (MGC).</title>
        <authorList>
            <consortium name="The MGC Project Team"/>
        </authorList>
    </citation>
    <scope>NUCLEOTIDE SEQUENCE [LARGE SCALE MRNA]</scope>
    <source>
        <tissue>Testis</tissue>
    </source>
</reference>
<reference key="4">
    <citation type="journal article" date="2002" name="Genomics">
        <title>DEFOG: a practical scheme for deciphering families of genes.</title>
        <authorList>
            <person name="Fuchs T."/>
            <person name="Malecova B."/>
            <person name="Linhart C."/>
            <person name="Sharan R."/>
            <person name="Khen M."/>
            <person name="Herwig R."/>
            <person name="Shmulevich D."/>
            <person name="Elkon R."/>
            <person name="Steinfath M."/>
            <person name="O'Brien J.K."/>
            <person name="Radelof U."/>
            <person name="Lehrach H."/>
            <person name="Lancet D."/>
            <person name="Shamir R."/>
        </authorList>
    </citation>
    <scope>NUCLEOTIDE SEQUENCE [GENOMIC DNA] OF 81-295</scope>
</reference>
<reference key="5">
    <citation type="journal article" date="2004" name="Proc. Natl. Acad. Sci. U.S.A.">
        <title>The human olfactory receptor gene family.</title>
        <authorList>
            <person name="Malnic B."/>
            <person name="Godfrey P.A."/>
            <person name="Buck L.B."/>
        </authorList>
    </citation>
    <scope>IDENTIFICATION</scope>
</reference>
<reference key="6">
    <citation type="journal article" date="2004" name="Proc. Natl. Acad. Sci. U.S.A.">
        <authorList>
            <person name="Malnic B."/>
            <person name="Godfrey P.A."/>
            <person name="Buck L.B."/>
        </authorList>
    </citation>
    <scope>ERRATUM OF PUBMED:14983052</scope>
</reference>
<keyword id="KW-1003">Cell membrane</keyword>
<keyword id="KW-1015">Disulfide bond</keyword>
<keyword id="KW-0297">G-protein coupled receptor</keyword>
<keyword id="KW-0325">Glycoprotein</keyword>
<keyword id="KW-0472">Membrane</keyword>
<keyword id="KW-0552">Olfaction</keyword>
<keyword id="KW-0675">Receptor</keyword>
<keyword id="KW-1185">Reference proteome</keyword>
<keyword id="KW-0716">Sensory transduction</keyword>
<keyword id="KW-0807">Transducer</keyword>
<keyword id="KW-0812">Transmembrane</keyword>
<keyword id="KW-1133">Transmembrane helix</keyword>
<protein>
    <recommendedName>
        <fullName>Olfactory receptor 10S1</fullName>
    </recommendedName>
    <alternativeName>
        <fullName>Olfactory receptor OR11-279</fullName>
    </alternativeName>
</protein>
<comment type="function">
    <text evidence="3">Odorant receptor.</text>
</comment>
<comment type="subcellular location">
    <subcellularLocation>
        <location>Cell membrane</location>
        <topology>Multi-pass membrane protein</topology>
    </subcellularLocation>
</comment>
<comment type="similarity">
    <text evidence="2">Belongs to the G-protein coupled receptor 1 family.</text>
</comment>
<comment type="caution">
    <text evidence="3">It is uncertain whether Met-1 or Met-10 is the initiator.</text>
</comment>
<comment type="sequence caution" evidence="3">
    <conflict type="erroneous initiation">
        <sequence resource="EMBL-CDS" id="BAC05978"/>
    </conflict>
</comment>
<comment type="online information" name="Human Olfactory Receptor Data Exploratorium (HORDE)">
    <link uri="http://genome.weizmann.ac.il/horde/card/index/symbol:OR10S1"/>
</comment>
<dbReference type="EMBL" id="AB065758">
    <property type="protein sequence ID" value="BAC05978.1"/>
    <property type="status" value="ALT_INIT"/>
    <property type="molecule type" value="Genomic_DNA"/>
</dbReference>
<dbReference type="EMBL" id="AP001884">
    <property type="status" value="NOT_ANNOTATED_CDS"/>
    <property type="molecule type" value="Genomic_DNA"/>
</dbReference>
<dbReference type="EMBL" id="BC137037">
    <property type="protein sequence ID" value="AAI37038.1"/>
    <property type="molecule type" value="mRNA"/>
</dbReference>
<dbReference type="EMBL" id="BC137038">
    <property type="protein sequence ID" value="AAI37039.1"/>
    <property type="molecule type" value="mRNA"/>
</dbReference>
<dbReference type="EMBL" id="AF399565">
    <property type="protein sequence ID" value="AAK95050.1"/>
    <property type="molecule type" value="Genomic_DNA"/>
</dbReference>
<dbReference type="EMBL" id="BK004509">
    <property type="protein sequence ID" value="DAA04907.1"/>
    <property type="molecule type" value="Genomic_DNA"/>
</dbReference>
<dbReference type="RefSeq" id="NP_001004474.1">
    <property type="nucleotide sequence ID" value="NM_001004474.1"/>
</dbReference>
<dbReference type="SMR" id="Q8NGN2"/>
<dbReference type="BioGRID" id="128589">
    <property type="interactions" value="10"/>
</dbReference>
<dbReference type="FunCoup" id="Q8NGN2">
    <property type="interactions" value="496"/>
</dbReference>
<dbReference type="IntAct" id="Q8NGN2">
    <property type="interactions" value="7"/>
</dbReference>
<dbReference type="STRING" id="9606.ENSP00000431914"/>
<dbReference type="GlyCosmos" id="Q8NGN2">
    <property type="glycosylation" value="1 site, No reported glycans"/>
</dbReference>
<dbReference type="GlyGen" id="Q8NGN2">
    <property type="glycosylation" value="1 site"/>
</dbReference>
<dbReference type="iPTMnet" id="Q8NGN2"/>
<dbReference type="PhosphoSitePlus" id="Q8NGN2"/>
<dbReference type="BioMuta" id="OR10S1"/>
<dbReference type="DMDM" id="223590111"/>
<dbReference type="MassIVE" id="Q8NGN2"/>
<dbReference type="PaxDb" id="9606-ENSP00000431914"/>
<dbReference type="Antibodypedia" id="18962">
    <property type="antibodies" value="113 antibodies from 23 providers"/>
</dbReference>
<dbReference type="DNASU" id="219873"/>
<dbReference type="GeneID" id="219873"/>
<dbReference type="KEGG" id="hsa:219873"/>
<dbReference type="UCSC" id="uc001pzm.2">
    <property type="organism name" value="human"/>
</dbReference>
<dbReference type="AGR" id="HGNC:14807"/>
<dbReference type="CTD" id="219873"/>
<dbReference type="GeneCards" id="OR10S1"/>
<dbReference type="HGNC" id="HGNC:14807">
    <property type="gene designation" value="OR10S1"/>
</dbReference>
<dbReference type="neXtProt" id="NX_Q8NGN2"/>
<dbReference type="PharmGKB" id="PA31999"/>
<dbReference type="VEuPathDB" id="HostDB:ENSG00000196248"/>
<dbReference type="eggNOG" id="ENOG502SI4A">
    <property type="taxonomic scope" value="Eukaryota"/>
</dbReference>
<dbReference type="HOGENOM" id="CLU_012526_1_0_1"/>
<dbReference type="InParanoid" id="Q8NGN2"/>
<dbReference type="OrthoDB" id="9442029at2759"/>
<dbReference type="PAN-GO" id="Q8NGN2">
    <property type="GO annotations" value="1 GO annotation based on evolutionary models"/>
</dbReference>
<dbReference type="PhylomeDB" id="Q8NGN2"/>
<dbReference type="TreeFam" id="TF352732"/>
<dbReference type="PathwayCommons" id="Q8NGN2"/>
<dbReference type="Reactome" id="R-HSA-381753">
    <property type="pathway name" value="Olfactory Signaling Pathway"/>
</dbReference>
<dbReference type="Reactome" id="R-HSA-9752946">
    <property type="pathway name" value="Expression and translocation of olfactory receptors"/>
</dbReference>
<dbReference type="BioGRID-ORCS" id="219873">
    <property type="hits" value="5 hits in 740 CRISPR screens"/>
</dbReference>
<dbReference type="GeneWiki" id="OR10S1"/>
<dbReference type="GenomeRNAi" id="219873"/>
<dbReference type="Pharos" id="Q8NGN2">
    <property type="development level" value="Tdark"/>
</dbReference>
<dbReference type="PRO" id="PR:Q8NGN2"/>
<dbReference type="Proteomes" id="UP000005640">
    <property type="component" value="Chromosome 11"/>
</dbReference>
<dbReference type="RNAct" id="Q8NGN2">
    <property type="molecule type" value="protein"/>
</dbReference>
<dbReference type="GO" id="GO:0005886">
    <property type="term" value="C:plasma membrane"/>
    <property type="evidence" value="ECO:0000318"/>
    <property type="project" value="GO_Central"/>
</dbReference>
<dbReference type="GO" id="GO:0004930">
    <property type="term" value="F:G protein-coupled receptor activity"/>
    <property type="evidence" value="ECO:0007669"/>
    <property type="project" value="UniProtKB-KW"/>
</dbReference>
<dbReference type="GO" id="GO:0004984">
    <property type="term" value="F:olfactory receptor activity"/>
    <property type="evidence" value="ECO:0000318"/>
    <property type="project" value="GO_Central"/>
</dbReference>
<dbReference type="GO" id="GO:0050911">
    <property type="term" value="P:detection of chemical stimulus involved in sensory perception of smell"/>
    <property type="evidence" value="ECO:0000318"/>
    <property type="project" value="GO_Central"/>
</dbReference>
<dbReference type="FunFam" id="1.20.1070.10:FF:000001">
    <property type="entry name" value="Olfactory receptor"/>
    <property type="match status" value="1"/>
</dbReference>
<dbReference type="Gene3D" id="1.20.1070.10">
    <property type="entry name" value="Rhodopsin 7-helix transmembrane proteins"/>
    <property type="match status" value="1"/>
</dbReference>
<dbReference type="InterPro" id="IPR000276">
    <property type="entry name" value="GPCR_Rhodpsn"/>
</dbReference>
<dbReference type="InterPro" id="IPR017452">
    <property type="entry name" value="GPCR_Rhodpsn_7TM"/>
</dbReference>
<dbReference type="InterPro" id="IPR000725">
    <property type="entry name" value="Olfact_rcpt"/>
</dbReference>
<dbReference type="InterPro" id="IPR050516">
    <property type="entry name" value="Olfactory_GPCR"/>
</dbReference>
<dbReference type="PANTHER" id="PTHR26452">
    <property type="entry name" value="OLFACTORY RECEPTOR"/>
    <property type="match status" value="1"/>
</dbReference>
<dbReference type="Pfam" id="PF13853">
    <property type="entry name" value="7tm_4"/>
    <property type="match status" value="1"/>
</dbReference>
<dbReference type="PRINTS" id="PR00237">
    <property type="entry name" value="GPCRRHODOPSN"/>
</dbReference>
<dbReference type="PRINTS" id="PR00245">
    <property type="entry name" value="OLFACTORYR"/>
</dbReference>
<dbReference type="SUPFAM" id="SSF81321">
    <property type="entry name" value="Family A G protein-coupled receptor-like"/>
    <property type="match status" value="1"/>
</dbReference>
<dbReference type="PROSITE" id="PS50262">
    <property type="entry name" value="G_PROTEIN_RECEP_F1_2"/>
    <property type="match status" value="1"/>
</dbReference>
<gene>
    <name type="primary">OR10S1</name>
</gene>
<feature type="chain" id="PRO_0000150716" description="Olfactory receptor 10S1">
    <location>
        <begin position="1"/>
        <end position="331"/>
    </location>
</feature>
<feature type="topological domain" description="Extracellular" evidence="1">
    <location>
        <begin position="1"/>
        <end position="38"/>
    </location>
</feature>
<feature type="transmembrane region" description="Helical; Name=1" evidence="1">
    <location>
        <begin position="39"/>
        <end position="59"/>
    </location>
</feature>
<feature type="topological domain" description="Cytoplasmic" evidence="1">
    <location>
        <begin position="60"/>
        <end position="67"/>
    </location>
</feature>
<feature type="transmembrane region" description="Helical; Name=2" evidence="1">
    <location>
        <begin position="68"/>
        <end position="88"/>
    </location>
</feature>
<feature type="topological domain" description="Extracellular" evidence="1">
    <location>
        <begin position="89"/>
        <end position="113"/>
    </location>
</feature>
<feature type="transmembrane region" description="Helical; Name=3" evidence="1">
    <location>
        <begin position="114"/>
        <end position="134"/>
    </location>
</feature>
<feature type="topological domain" description="Cytoplasmic" evidence="1">
    <location>
        <begin position="135"/>
        <end position="153"/>
    </location>
</feature>
<feature type="transmembrane region" description="Helical; Name=4" evidence="1">
    <location>
        <begin position="154"/>
        <end position="174"/>
    </location>
</feature>
<feature type="topological domain" description="Extracellular" evidence="1">
    <location>
        <begin position="175"/>
        <end position="211"/>
    </location>
</feature>
<feature type="transmembrane region" description="Helical; Name=5" evidence="1">
    <location>
        <begin position="212"/>
        <end position="231"/>
    </location>
</feature>
<feature type="topological domain" description="Cytoplasmic" evidence="1">
    <location>
        <begin position="232"/>
        <end position="251"/>
    </location>
</feature>
<feature type="transmembrane region" description="Helical; Name=6" evidence="1">
    <location>
        <begin position="252"/>
        <end position="272"/>
    </location>
</feature>
<feature type="topological domain" description="Extracellular" evidence="1">
    <location>
        <begin position="273"/>
        <end position="283"/>
    </location>
</feature>
<feature type="transmembrane region" description="Helical; Name=7" evidence="1">
    <location>
        <begin position="284"/>
        <end position="304"/>
    </location>
</feature>
<feature type="topological domain" description="Cytoplasmic" evidence="1">
    <location>
        <begin position="305"/>
        <end position="331"/>
    </location>
</feature>
<feature type="glycosylation site" description="N-linked (GlcNAc...) asparagine" evidence="1">
    <location>
        <position position="18"/>
    </location>
</feature>
<feature type="disulfide bond" evidence="2">
    <location>
        <begin position="111"/>
        <end position="203"/>
    </location>
</feature>
<feature type="sequence variant" id="VAR_054358" description="In dbSNP:rs17759513.">
    <original>G</original>
    <variation>S</variation>
    <location>
        <position position="63"/>
    </location>
</feature>
<feature type="sequence variant" id="VAR_054359" description="In dbSNP:rs17686210.">
    <original>K</original>
    <variation>R</variation>
    <location>
        <position position="93"/>
    </location>
</feature>
<feature type="sequence variant" id="VAR_054360" description="In dbSNP:rs17759447.">
    <original>A</original>
    <variation>V</variation>
    <location>
        <position position="112"/>
    </location>
</feature>